<protein>
    <recommendedName>
        <fullName evidence="1">Protein translocase subunit SecA</fullName>
        <ecNumber evidence="1">7.4.2.8</ecNumber>
    </recommendedName>
</protein>
<dbReference type="EC" id="7.4.2.8" evidence="1"/>
<dbReference type="EMBL" id="AE014613">
    <property type="protein sequence ID" value="AAO67872.1"/>
    <property type="molecule type" value="Genomic_DNA"/>
</dbReference>
<dbReference type="EMBL" id="AL513382">
    <property type="protein sequence ID" value="CAD01293.1"/>
    <property type="molecule type" value="Genomic_DNA"/>
</dbReference>
<dbReference type="RefSeq" id="NP_454748.1">
    <property type="nucleotide sequence ID" value="NC_003198.1"/>
</dbReference>
<dbReference type="RefSeq" id="WP_000905763.1">
    <property type="nucleotide sequence ID" value="NZ_WSUR01000009.1"/>
</dbReference>
<dbReference type="SMR" id="Q8Z9G3"/>
<dbReference type="STRING" id="220341.gene:17584195"/>
<dbReference type="KEGG" id="stt:t0140"/>
<dbReference type="KEGG" id="sty:STY0156"/>
<dbReference type="PATRIC" id="fig|220341.7.peg.156"/>
<dbReference type="eggNOG" id="COG0653">
    <property type="taxonomic scope" value="Bacteria"/>
</dbReference>
<dbReference type="HOGENOM" id="CLU_005314_3_0_6"/>
<dbReference type="OMA" id="MVHYDVQ"/>
<dbReference type="OrthoDB" id="9805579at2"/>
<dbReference type="Proteomes" id="UP000000541">
    <property type="component" value="Chromosome"/>
</dbReference>
<dbReference type="Proteomes" id="UP000002670">
    <property type="component" value="Chromosome"/>
</dbReference>
<dbReference type="GO" id="GO:0031522">
    <property type="term" value="C:cell envelope Sec protein transport complex"/>
    <property type="evidence" value="ECO:0007669"/>
    <property type="project" value="TreeGrafter"/>
</dbReference>
<dbReference type="GO" id="GO:0005829">
    <property type="term" value="C:cytosol"/>
    <property type="evidence" value="ECO:0007669"/>
    <property type="project" value="TreeGrafter"/>
</dbReference>
<dbReference type="GO" id="GO:0005886">
    <property type="term" value="C:plasma membrane"/>
    <property type="evidence" value="ECO:0007669"/>
    <property type="project" value="UniProtKB-SubCell"/>
</dbReference>
<dbReference type="GO" id="GO:0005524">
    <property type="term" value="F:ATP binding"/>
    <property type="evidence" value="ECO:0007669"/>
    <property type="project" value="UniProtKB-UniRule"/>
</dbReference>
<dbReference type="GO" id="GO:0046872">
    <property type="term" value="F:metal ion binding"/>
    <property type="evidence" value="ECO:0007669"/>
    <property type="project" value="UniProtKB-KW"/>
</dbReference>
<dbReference type="GO" id="GO:0008564">
    <property type="term" value="F:protein-exporting ATPase activity"/>
    <property type="evidence" value="ECO:0007669"/>
    <property type="project" value="UniProtKB-EC"/>
</dbReference>
<dbReference type="GO" id="GO:0065002">
    <property type="term" value="P:intracellular protein transmembrane transport"/>
    <property type="evidence" value="ECO:0007669"/>
    <property type="project" value="UniProtKB-UniRule"/>
</dbReference>
<dbReference type="GO" id="GO:0017038">
    <property type="term" value="P:protein import"/>
    <property type="evidence" value="ECO:0007669"/>
    <property type="project" value="InterPro"/>
</dbReference>
<dbReference type="GO" id="GO:0006605">
    <property type="term" value="P:protein targeting"/>
    <property type="evidence" value="ECO:0007669"/>
    <property type="project" value="UniProtKB-UniRule"/>
</dbReference>
<dbReference type="GO" id="GO:0043952">
    <property type="term" value="P:protein transport by the Sec complex"/>
    <property type="evidence" value="ECO:0007669"/>
    <property type="project" value="TreeGrafter"/>
</dbReference>
<dbReference type="CDD" id="cd17928">
    <property type="entry name" value="DEXDc_SecA"/>
    <property type="match status" value="1"/>
</dbReference>
<dbReference type="CDD" id="cd18803">
    <property type="entry name" value="SF2_C_secA"/>
    <property type="match status" value="1"/>
</dbReference>
<dbReference type="FunFam" id="1.10.3060.10:FF:000001">
    <property type="entry name" value="Preprotein translocase subunit SecA"/>
    <property type="match status" value="1"/>
</dbReference>
<dbReference type="FunFam" id="3.40.50.300:FF:000081">
    <property type="entry name" value="Preprotein translocase subunit SecA"/>
    <property type="match status" value="1"/>
</dbReference>
<dbReference type="FunFam" id="3.40.50.300:FF:000113">
    <property type="entry name" value="Preprotein translocase subunit SecA"/>
    <property type="match status" value="1"/>
</dbReference>
<dbReference type="FunFam" id="3.90.1440.10:FF:000001">
    <property type="entry name" value="Preprotein translocase subunit SecA"/>
    <property type="match status" value="1"/>
</dbReference>
<dbReference type="Gene3D" id="1.10.3060.10">
    <property type="entry name" value="Helical scaffold and wing domains of SecA"/>
    <property type="match status" value="1"/>
</dbReference>
<dbReference type="Gene3D" id="3.40.50.300">
    <property type="entry name" value="P-loop containing nucleotide triphosphate hydrolases"/>
    <property type="match status" value="2"/>
</dbReference>
<dbReference type="Gene3D" id="3.90.1440.10">
    <property type="entry name" value="SecA, preprotein cross-linking domain"/>
    <property type="match status" value="1"/>
</dbReference>
<dbReference type="HAMAP" id="MF_01382">
    <property type="entry name" value="SecA"/>
    <property type="match status" value="1"/>
</dbReference>
<dbReference type="InterPro" id="IPR014001">
    <property type="entry name" value="Helicase_ATP-bd"/>
</dbReference>
<dbReference type="InterPro" id="IPR027417">
    <property type="entry name" value="P-loop_NTPase"/>
</dbReference>
<dbReference type="InterPro" id="IPR004027">
    <property type="entry name" value="SEC_C_motif"/>
</dbReference>
<dbReference type="InterPro" id="IPR000185">
    <property type="entry name" value="SecA"/>
</dbReference>
<dbReference type="InterPro" id="IPR020937">
    <property type="entry name" value="SecA_CS"/>
</dbReference>
<dbReference type="InterPro" id="IPR011115">
    <property type="entry name" value="SecA_DEAD"/>
</dbReference>
<dbReference type="InterPro" id="IPR014018">
    <property type="entry name" value="SecA_motor_DEAD"/>
</dbReference>
<dbReference type="InterPro" id="IPR011130">
    <property type="entry name" value="SecA_preprotein_X-link_dom"/>
</dbReference>
<dbReference type="InterPro" id="IPR044722">
    <property type="entry name" value="SecA_SF2_C"/>
</dbReference>
<dbReference type="InterPro" id="IPR011116">
    <property type="entry name" value="SecA_Wing/Scaffold"/>
</dbReference>
<dbReference type="InterPro" id="IPR036266">
    <property type="entry name" value="SecA_Wing/Scaffold_sf"/>
</dbReference>
<dbReference type="InterPro" id="IPR036670">
    <property type="entry name" value="SecA_X-link_sf"/>
</dbReference>
<dbReference type="NCBIfam" id="NF009538">
    <property type="entry name" value="PRK12904.1"/>
    <property type="match status" value="1"/>
</dbReference>
<dbReference type="NCBIfam" id="TIGR00963">
    <property type="entry name" value="secA"/>
    <property type="match status" value="1"/>
</dbReference>
<dbReference type="PANTHER" id="PTHR30612:SF0">
    <property type="entry name" value="CHLOROPLAST PROTEIN-TRANSPORTING ATPASE"/>
    <property type="match status" value="1"/>
</dbReference>
<dbReference type="PANTHER" id="PTHR30612">
    <property type="entry name" value="SECA INNER MEMBRANE COMPONENT OF SEC PROTEIN SECRETION SYSTEM"/>
    <property type="match status" value="1"/>
</dbReference>
<dbReference type="Pfam" id="PF21090">
    <property type="entry name" value="P-loop_SecA"/>
    <property type="match status" value="1"/>
</dbReference>
<dbReference type="Pfam" id="PF02810">
    <property type="entry name" value="SEC-C"/>
    <property type="match status" value="1"/>
</dbReference>
<dbReference type="Pfam" id="PF07517">
    <property type="entry name" value="SecA_DEAD"/>
    <property type="match status" value="1"/>
</dbReference>
<dbReference type="Pfam" id="PF01043">
    <property type="entry name" value="SecA_PP_bind"/>
    <property type="match status" value="1"/>
</dbReference>
<dbReference type="Pfam" id="PF07516">
    <property type="entry name" value="SecA_SW"/>
    <property type="match status" value="1"/>
</dbReference>
<dbReference type="PRINTS" id="PR00906">
    <property type="entry name" value="SECA"/>
</dbReference>
<dbReference type="SMART" id="SM00957">
    <property type="entry name" value="SecA_DEAD"/>
    <property type="match status" value="1"/>
</dbReference>
<dbReference type="SMART" id="SM00958">
    <property type="entry name" value="SecA_PP_bind"/>
    <property type="match status" value="1"/>
</dbReference>
<dbReference type="SUPFAM" id="SSF81886">
    <property type="entry name" value="Helical scaffold and wing domains of SecA"/>
    <property type="match status" value="1"/>
</dbReference>
<dbReference type="SUPFAM" id="SSF52540">
    <property type="entry name" value="P-loop containing nucleoside triphosphate hydrolases"/>
    <property type="match status" value="2"/>
</dbReference>
<dbReference type="SUPFAM" id="SSF81767">
    <property type="entry name" value="Pre-protein crosslinking domain of SecA"/>
    <property type="match status" value="1"/>
</dbReference>
<dbReference type="PROSITE" id="PS01312">
    <property type="entry name" value="SECA"/>
    <property type="match status" value="1"/>
</dbReference>
<dbReference type="PROSITE" id="PS51196">
    <property type="entry name" value="SECA_MOTOR_DEAD"/>
    <property type="match status" value="1"/>
</dbReference>
<comment type="function">
    <text evidence="1">Part of the Sec protein translocase complex. Interacts with the SecYEG preprotein conducting channel. Has a central role in coupling the hydrolysis of ATP to the transfer of proteins into and across the cell membrane, serving both as a receptor for the preprotein-SecB complex and as an ATP-driven molecular motor driving the stepwise translocation of polypeptide chains across the membrane.</text>
</comment>
<comment type="catalytic activity">
    <reaction evidence="1">
        <text>ATP + H2O + cellular proteinSide 1 = ADP + phosphate + cellular proteinSide 2.</text>
        <dbReference type="EC" id="7.4.2.8"/>
    </reaction>
</comment>
<comment type="cofactor">
    <cofactor evidence="1">
        <name>Zn(2+)</name>
        <dbReference type="ChEBI" id="CHEBI:29105"/>
    </cofactor>
    <text evidence="1">May bind 1 zinc ion per subunit.</text>
</comment>
<comment type="subunit">
    <text evidence="1">Monomer and homodimer. Part of the essential Sec protein translocation apparatus which comprises SecA, SecYEG and auxiliary proteins SecDF-YajC and YidC.</text>
</comment>
<comment type="subcellular location">
    <subcellularLocation>
        <location evidence="1">Cell inner membrane</location>
        <topology evidence="1">Peripheral membrane protein</topology>
        <orientation evidence="1">Cytoplasmic side</orientation>
    </subcellularLocation>
    <subcellularLocation>
        <location evidence="1">Cytoplasm</location>
    </subcellularLocation>
    <text evidence="1">Distribution is 50-50.</text>
</comment>
<comment type="induction">
    <text evidence="1">Repressed under conditions of excess protein secretion capacity and derepressed when protein secretion becomes limiting. This is regulated by SecM.</text>
</comment>
<comment type="similarity">
    <text evidence="1">Belongs to the SecA family.</text>
</comment>
<gene>
    <name evidence="1" type="primary">secA</name>
    <name type="ordered locus">STY0156</name>
    <name type="ordered locus">t0140</name>
</gene>
<organism>
    <name type="scientific">Salmonella typhi</name>
    <dbReference type="NCBI Taxonomy" id="90370"/>
    <lineage>
        <taxon>Bacteria</taxon>
        <taxon>Pseudomonadati</taxon>
        <taxon>Pseudomonadota</taxon>
        <taxon>Gammaproteobacteria</taxon>
        <taxon>Enterobacterales</taxon>
        <taxon>Enterobacteriaceae</taxon>
        <taxon>Salmonella</taxon>
    </lineage>
</organism>
<proteinExistence type="inferred from homology"/>
<accession>Q8Z9G3</accession>
<accession>Q7CBT8</accession>
<feature type="chain" id="PRO_0000320986" description="Protein translocase subunit SecA">
    <location>
        <begin position="1"/>
        <end position="901"/>
    </location>
</feature>
<feature type="binding site" evidence="1">
    <location>
        <position position="87"/>
    </location>
    <ligand>
        <name>ATP</name>
        <dbReference type="ChEBI" id="CHEBI:30616"/>
    </ligand>
</feature>
<feature type="binding site" evidence="1">
    <location>
        <begin position="105"/>
        <end position="109"/>
    </location>
    <ligand>
        <name>ATP</name>
        <dbReference type="ChEBI" id="CHEBI:30616"/>
    </ligand>
</feature>
<feature type="binding site" evidence="1">
    <location>
        <position position="512"/>
    </location>
    <ligand>
        <name>ATP</name>
        <dbReference type="ChEBI" id="CHEBI:30616"/>
    </ligand>
</feature>
<feature type="binding site" evidence="1">
    <location>
        <position position="885"/>
    </location>
    <ligand>
        <name>Zn(2+)</name>
        <dbReference type="ChEBI" id="CHEBI:29105"/>
    </ligand>
</feature>
<feature type="binding site" evidence="1">
    <location>
        <position position="887"/>
    </location>
    <ligand>
        <name>Zn(2+)</name>
        <dbReference type="ChEBI" id="CHEBI:29105"/>
    </ligand>
</feature>
<feature type="binding site" evidence="1">
    <location>
        <position position="896"/>
    </location>
    <ligand>
        <name>Zn(2+)</name>
        <dbReference type="ChEBI" id="CHEBI:29105"/>
    </ligand>
</feature>
<feature type="binding site" evidence="1">
    <location>
        <position position="897"/>
    </location>
    <ligand>
        <name>Zn(2+)</name>
        <dbReference type="ChEBI" id="CHEBI:29105"/>
    </ligand>
</feature>
<sequence length="901" mass="101736">MLIKLLTKVFGSRNDRTLRRMRKAVSLINAMEPEMEKLSDDELKAKTNEFRARIGKGESVESLIPEAFAVVREASKRVFGMRHFDVQLLGGMVLNDRCIAEMRTGEGKTLTATLPAYLNALSGKGVHVVTVNDYLAQRDAENNRPLFEFLGMSVGINLPGMPAPAKREAYAADITYGTNNEYGFDYLRDNMAFSPEERVQRKLHYALVDEVDSILIDEARTPLIISGPAEDSSEMYKKVNKIIPHLIRQEKEDSDTFQGEGHFSVDEKARQVNLTERGLVLIEELLVQEGIMDEGESLYSPGNIMLMHHVTAALRAHALFTRDVDYIVKDGEVIIVDEHTGRTMQGRRWSDGLHQAVEAKEGVEIQNENQTLASITFQNYFRLYEKLAGMTGTADTEAFEFSSIYKLDTVVVPTNRPMIRKDLPDLVYITEAEKIQAIIEDIKERTANGQPVLVGTISIEKSEVVSRELTKAGIKHNVLNAKFHANEAGIVAQAGYPAAVTIATNMAGRGTDIMLGGSWQAEVAALEAPTEEQIAQIKADWQVRHDAVLAAGGLHIIGTERHESRRIDNQLRGRSGRQGDPGSSRFYLSMEDALMRIFASDRVSGMMRKLGMKPGEAIEHPWVTKAIANAQRKVESRNFDIRKQLLEYDDVANDQRRAIYTQRNELLDVSDVSDTINSIREDVFKATIDAYIPPQSLEEMWDIPGLQERLKNDFDLEMPIAEWLDKEPELHEETLRERILAQSIEVYQRKEEVVGAEMMRHFEKGVMLQTLDSLWKEHLAAMDYLRQGIHLRGYAQKDPKQEYKRESFAMFAAMLESLKYEVISTLSKVQVRMPEEVEAMEMQRREEAERLAQMQQLSHQDDDAAVAADLAAQTGERKIGRNDPCPCGSGKKYKQCHGRLS</sequence>
<keyword id="KW-0067">ATP-binding</keyword>
<keyword id="KW-0997">Cell inner membrane</keyword>
<keyword id="KW-1003">Cell membrane</keyword>
<keyword id="KW-0963">Cytoplasm</keyword>
<keyword id="KW-0472">Membrane</keyword>
<keyword id="KW-0479">Metal-binding</keyword>
<keyword id="KW-0547">Nucleotide-binding</keyword>
<keyword id="KW-0653">Protein transport</keyword>
<keyword id="KW-1278">Translocase</keyword>
<keyword id="KW-0811">Translocation</keyword>
<keyword id="KW-0813">Transport</keyword>
<keyword id="KW-0862">Zinc</keyword>
<name>SECA_SALTI</name>
<evidence type="ECO:0000255" key="1">
    <source>
        <dbReference type="HAMAP-Rule" id="MF_01382"/>
    </source>
</evidence>
<reference key="1">
    <citation type="journal article" date="2001" name="Nature">
        <title>Complete genome sequence of a multiple drug resistant Salmonella enterica serovar Typhi CT18.</title>
        <authorList>
            <person name="Parkhill J."/>
            <person name="Dougan G."/>
            <person name="James K.D."/>
            <person name="Thomson N.R."/>
            <person name="Pickard D."/>
            <person name="Wain J."/>
            <person name="Churcher C.M."/>
            <person name="Mungall K.L."/>
            <person name="Bentley S.D."/>
            <person name="Holden M.T.G."/>
            <person name="Sebaihia M."/>
            <person name="Baker S."/>
            <person name="Basham D."/>
            <person name="Brooks K."/>
            <person name="Chillingworth T."/>
            <person name="Connerton P."/>
            <person name="Cronin A."/>
            <person name="Davis P."/>
            <person name="Davies R.M."/>
            <person name="Dowd L."/>
            <person name="White N."/>
            <person name="Farrar J."/>
            <person name="Feltwell T."/>
            <person name="Hamlin N."/>
            <person name="Haque A."/>
            <person name="Hien T.T."/>
            <person name="Holroyd S."/>
            <person name="Jagels K."/>
            <person name="Krogh A."/>
            <person name="Larsen T.S."/>
            <person name="Leather S."/>
            <person name="Moule S."/>
            <person name="O'Gaora P."/>
            <person name="Parry C."/>
            <person name="Quail M.A."/>
            <person name="Rutherford K.M."/>
            <person name="Simmonds M."/>
            <person name="Skelton J."/>
            <person name="Stevens K."/>
            <person name="Whitehead S."/>
            <person name="Barrell B.G."/>
        </authorList>
    </citation>
    <scope>NUCLEOTIDE SEQUENCE [LARGE SCALE GENOMIC DNA]</scope>
    <source>
        <strain>CT18</strain>
    </source>
</reference>
<reference key="2">
    <citation type="journal article" date="2003" name="J. Bacteriol.">
        <title>Comparative genomics of Salmonella enterica serovar Typhi strains Ty2 and CT18.</title>
        <authorList>
            <person name="Deng W."/>
            <person name="Liou S.-R."/>
            <person name="Plunkett G. III"/>
            <person name="Mayhew G.F."/>
            <person name="Rose D.J."/>
            <person name="Burland V."/>
            <person name="Kodoyianni V."/>
            <person name="Schwartz D.C."/>
            <person name="Blattner F.R."/>
        </authorList>
    </citation>
    <scope>NUCLEOTIDE SEQUENCE [LARGE SCALE GENOMIC DNA]</scope>
    <source>
        <strain>ATCC 700931 / Ty2</strain>
    </source>
</reference>